<name>MNMA_ACIF2</name>
<feature type="chain" id="PRO_1000203299" description="tRNA-specific 2-thiouridylase MnmA">
    <location>
        <begin position="1"/>
        <end position="352"/>
    </location>
</feature>
<feature type="region of interest" description="Interaction with tRNA" evidence="1">
    <location>
        <begin position="142"/>
        <end position="144"/>
    </location>
</feature>
<feature type="region of interest" description="Interaction with tRNA" evidence="1">
    <location>
        <begin position="299"/>
        <end position="300"/>
    </location>
</feature>
<feature type="active site" description="Nucleophile" evidence="1">
    <location>
        <position position="96"/>
    </location>
</feature>
<feature type="active site" description="Cysteine persulfide intermediate" evidence="1">
    <location>
        <position position="192"/>
    </location>
</feature>
<feature type="binding site" evidence="1">
    <location>
        <begin position="9"/>
        <end position="16"/>
    </location>
    <ligand>
        <name>ATP</name>
        <dbReference type="ChEBI" id="CHEBI:30616"/>
    </ligand>
</feature>
<feature type="binding site" evidence="1">
    <location>
        <position position="35"/>
    </location>
    <ligand>
        <name>ATP</name>
        <dbReference type="ChEBI" id="CHEBI:30616"/>
    </ligand>
</feature>
<feature type="binding site" evidence="1">
    <location>
        <position position="120"/>
    </location>
    <ligand>
        <name>ATP</name>
        <dbReference type="ChEBI" id="CHEBI:30616"/>
    </ligand>
</feature>
<feature type="site" description="Interaction with tRNA" evidence="1">
    <location>
        <position position="121"/>
    </location>
</feature>
<feature type="site" description="Interaction with tRNA" evidence="1">
    <location>
        <position position="332"/>
    </location>
</feature>
<feature type="disulfide bond" description="Alternate" evidence="1">
    <location>
        <begin position="96"/>
        <end position="192"/>
    </location>
</feature>
<gene>
    <name evidence="1" type="primary">mnmA</name>
    <name type="ordered locus">AFE_0680</name>
</gene>
<reference key="1">
    <citation type="journal article" date="2008" name="BMC Genomics">
        <title>Acidithiobacillus ferrooxidans metabolism: from genome sequence to industrial applications.</title>
        <authorList>
            <person name="Valdes J."/>
            <person name="Pedroso I."/>
            <person name="Quatrini R."/>
            <person name="Dodson R.J."/>
            <person name="Tettelin H."/>
            <person name="Blake R. II"/>
            <person name="Eisen J.A."/>
            <person name="Holmes D.S."/>
        </authorList>
    </citation>
    <scope>NUCLEOTIDE SEQUENCE [LARGE SCALE GENOMIC DNA]</scope>
    <source>
        <strain>ATCC 23270 / DSM 14882 / CIP 104768 / NCIMB 8455</strain>
    </source>
</reference>
<organism>
    <name type="scientific">Acidithiobacillus ferrooxidans (strain ATCC 23270 / DSM 14882 / CIP 104768 / NCIMB 8455)</name>
    <name type="common">Ferrobacillus ferrooxidans (strain ATCC 23270)</name>
    <dbReference type="NCBI Taxonomy" id="243159"/>
    <lineage>
        <taxon>Bacteria</taxon>
        <taxon>Pseudomonadati</taxon>
        <taxon>Pseudomonadota</taxon>
        <taxon>Acidithiobacillia</taxon>
        <taxon>Acidithiobacillales</taxon>
        <taxon>Acidithiobacillaceae</taxon>
        <taxon>Acidithiobacillus</taxon>
    </lineage>
</organism>
<accession>B7J5X6</accession>
<proteinExistence type="inferred from homology"/>
<keyword id="KW-0067">ATP-binding</keyword>
<keyword id="KW-0963">Cytoplasm</keyword>
<keyword id="KW-1015">Disulfide bond</keyword>
<keyword id="KW-0547">Nucleotide-binding</keyword>
<keyword id="KW-1185">Reference proteome</keyword>
<keyword id="KW-0694">RNA-binding</keyword>
<keyword id="KW-0808">Transferase</keyword>
<keyword id="KW-0819">tRNA processing</keyword>
<keyword id="KW-0820">tRNA-binding</keyword>
<evidence type="ECO:0000255" key="1">
    <source>
        <dbReference type="HAMAP-Rule" id="MF_00144"/>
    </source>
</evidence>
<protein>
    <recommendedName>
        <fullName evidence="1">tRNA-specific 2-thiouridylase MnmA</fullName>
        <ecNumber evidence="1">2.8.1.13</ecNumber>
    </recommendedName>
</protein>
<sequence>MADKKALIALSGGVDSAVAALLMQGQGYELTGVTMRLWPRSRCCDEKDIEDAAEICARLGIPYTVLDYREAFRRQVVDVFVAEYQAGRTPNPCARCNQFLKFDALLAEGEKLGATMLATGHYARLAETSSGTALLRGRDHAKDQSYFLFAIGAGILSRLRFPVGGMNKDEVRAMARKHGLPVAAKQDSQDICFVPDGDYRRFLEDYAGLDMAQEGEMVDSSGQVLGHHPGTLHFTVGQRKGLGGGSDQPRYVLALDPAQNRVIVGGEDELYRGVVSLAECNWLTDLSPGETHAVTVKLRYRSRAESAMLHLLSDARAELRFREPQRAVTPGQAAVCYQGERLLGGGWIQGTE</sequence>
<dbReference type="EC" id="2.8.1.13" evidence="1"/>
<dbReference type="EMBL" id="CP001219">
    <property type="protein sequence ID" value="ACK79058.1"/>
    <property type="molecule type" value="Genomic_DNA"/>
</dbReference>
<dbReference type="RefSeq" id="WP_012536279.1">
    <property type="nucleotide sequence ID" value="NC_011761.1"/>
</dbReference>
<dbReference type="SMR" id="B7J5X6"/>
<dbReference type="STRING" id="243159.AFE_0680"/>
<dbReference type="PaxDb" id="243159-AFE_0680"/>
<dbReference type="GeneID" id="65280031"/>
<dbReference type="KEGG" id="afr:AFE_0680"/>
<dbReference type="eggNOG" id="COG0482">
    <property type="taxonomic scope" value="Bacteria"/>
</dbReference>
<dbReference type="HOGENOM" id="CLU_035188_0_0_6"/>
<dbReference type="Proteomes" id="UP000001362">
    <property type="component" value="Chromosome"/>
</dbReference>
<dbReference type="GO" id="GO:0005737">
    <property type="term" value="C:cytoplasm"/>
    <property type="evidence" value="ECO:0007669"/>
    <property type="project" value="UniProtKB-SubCell"/>
</dbReference>
<dbReference type="GO" id="GO:0005524">
    <property type="term" value="F:ATP binding"/>
    <property type="evidence" value="ECO:0007669"/>
    <property type="project" value="UniProtKB-KW"/>
</dbReference>
<dbReference type="GO" id="GO:0000049">
    <property type="term" value="F:tRNA binding"/>
    <property type="evidence" value="ECO:0007669"/>
    <property type="project" value="UniProtKB-KW"/>
</dbReference>
<dbReference type="GO" id="GO:0103016">
    <property type="term" value="F:tRNA-uridine 2-sulfurtransferase activity"/>
    <property type="evidence" value="ECO:0007669"/>
    <property type="project" value="UniProtKB-EC"/>
</dbReference>
<dbReference type="GO" id="GO:0002143">
    <property type="term" value="P:tRNA wobble position uridine thiolation"/>
    <property type="evidence" value="ECO:0007669"/>
    <property type="project" value="TreeGrafter"/>
</dbReference>
<dbReference type="CDD" id="cd01998">
    <property type="entry name" value="MnmA_TRMU-like"/>
    <property type="match status" value="1"/>
</dbReference>
<dbReference type="FunFam" id="3.40.50.620:FF:000115">
    <property type="entry name" value="tRNA-specific 2-thiouridylase MnmA"/>
    <property type="match status" value="1"/>
</dbReference>
<dbReference type="Gene3D" id="2.30.30.280">
    <property type="entry name" value="Adenine nucleotide alpha hydrolases-like domains"/>
    <property type="match status" value="1"/>
</dbReference>
<dbReference type="Gene3D" id="3.40.50.620">
    <property type="entry name" value="HUPs"/>
    <property type="match status" value="1"/>
</dbReference>
<dbReference type="Gene3D" id="2.40.30.10">
    <property type="entry name" value="Translation factors"/>
    <property type="match status" value="1"/>
</dbReference>
<dbReference type="HAMAP" id="MF_00144">
    <property type="entry name" value="tRNA_thiouridyl_MnmA"/>
    <property type="match status" value="1"/>
</dbReference>
<dbReference type="InterPro" id="IPR004506">
    <property type="entry name" value="MnmA-like"/>
</dbReference>
<dbReference type="InterPro" id="IPR046885">
    <property type="entry name" value="MnmA-like_C"/>
</dbReference>
<dbReference type="InterPro" id="IPR046884">
    <property type="entry name" value="MnmA-like_central"/>
</dbReference>
<dbReference type="InterPro" id="IPR023382">
    <property type="entry name" value="MnmA-like_central_sf"/>
</dbReference>
<dbReference type="InterPro" id="IPR014729">
    <property type="entry name" value="Rossmann-like_a/b/a_fold"/>
</dbReference>
<dbReference type="NCBIfam" id="NF001138">
    <property type="entry name" value="PRK00143.1"/>
    <property type="match status" value="1"/>
</dbReference>
<dbReference type="NCBIfam" id="TIGR00420">
    <property type="entry name" value="trmU"/>
    <property type="match status" value="1"/>
</dbReference>
<dbReference type="PANTHER" id="PTHR11933:SF5">
    <property type="entry name" value="MITOCHONDRIAL TRNA-SPECIFIC 2-THIOURIDYLASE 1"/>
    <property type="match status" value="1"/>
</dbReference>
<dbReference type="PANTHER" id="PTHR11933">
    <property type="entry name" value="TRNA 5-METHYLAMINOMETHYL-2-THIOURIDYLATE -METHYLTRANSFERASE"/>
    <property type="match status" value="1"/>
</dbReference>
<dbReference type="Pfam" id="PF03054">
    <property type="entry name" value="tRNA_Me_trans"/>
    <property type="match status" value="1"/>
</dbReference>
<dbReference type="Pfam" id="PF20258">
    <property type="entry name" value="tRNA_Me_trans_C"/>
    <property type="match status" value="1"/>
</dbReference>
<dbReference type="Pfam" id="PF20259">
    <property type="entry name" value="tRNA_Me_trans_M"/>
    <property type="match status" value="1"/>
</dbReference>
<dbReference type="SUPFAM" id="SSF52402">
    <property type="entry name" value="Adenine nucleotide alpha hydrolases-like"/>
    <property type="match status" value="1"/>
</dbReference>
<comment type="function">
    <text evidence="1">Catalyzes the 2-thiolation of uridine at the wobble position (U34) of tRNA, leading to the formation of s(2)U34.</text>
</comment>
<comment type="catalytic activity">
    <reaction evidence="1">
        <text>S-sulfanyl-L-cysteinyl-[protein] + uridine(34) in tRNA + AH2 + ATP = 2-thiouridine(34) in tRNA + L-cysteinyl-[protein] + A + AMP + diphosphate + H(+)</text>
        <dbReference type="Rhea" id="RHEA:47032"/>
        <dbReference type="Rhea" id="RHEA-COMP:10131"/>
        <dbReference type="Rhea" id="RHEA-COMP:11726"/>
        <dbReference type="Rhea" id="RHEA-COMP:11727"/>
        <dbReference type="Rhea" id="RHEA-COMP:11728"/>
        <dbReference type="ChEBI" id="CHEBI:13193"/>
        <dbReference type="ChEBI" id="CHEBI:15378"/>
        <dbReference type="ChEBI" id="CHEBI:17499"/>
        <dbReference type="ChEBI" id="CHEBI:29950"/>
        <dbReference type="ChEBI" id="CHEBI:30616"/>
        <dbReference type="ChEBI" id="CHEBI:33019"/>
        <dbReference type="ChEBI" id="CHEBI:61963"/>
        <dbReference type="ChEBI" id="CHEBI:65315"/>
        <dbReference type="ChEBI" id="CHEBI:87170"/>
        <dbReference type="ChEBI" id="CHEBI:456215"/>
        <dbReference type="EC" id="2.8.1.13"/>
    </reaction>
</comment>
<comment type="subcellular location">
    <subcellularLocation>
        <location evidence="1">Cytoplasm</location>
    </subcellularLocation>
</comment>
<comment type="similarity">
    <text evidence="1">Belongs to the MnmA/TRMU family.</text>
</comment>